<comment type="function">
    <text evidence="1">Catalyzes the transfer of endogenously produced octanoic acid from octanoyl-acyl-carrier-protein onto the lipoyl domains of lipoate-dependent enzymes. Lipoyl-ACP can also act as a substrate although octanoyl-ACP is likely to be the physiological substrate.</text>
</comment>
<comment type="catalytic activity">
    <reaction evidence="1">
        <text>octanoyl-[ACP] + L-lysyl-[protein] = N(6)-octanoyl-L-lysyl-[protein] + holo-[ACP] + H(+)</text>
        <dbReference type="Rhea" id="RHEA:17665"/>
        <dbReference type="Rhea" id="RHEA-COMP:9636"/>
        <dbReference type="Rhea" id="RHEA-COMP:9685"/>
        <dbReference type="Rhea" id="RHEA-COMP:9752"/>
        <dbReference type="Rhea" id="RHEA-COMP:9928"/>
        <dbReference type="ChEBI" id="CHEBI:15378"/>
        <dbReference type="ChEBI" id="CHEBI:29969"/>
        <dbReference type="ChEBI" id="CHEBI:64479"/>
        <dbReference type="ChEBI" id="CHEBI:78463"/>
        <dbReference type="ChEBI" id="CHEBI:78809"/>
        <dbReference type="EC" id="2.3.1.181"/>
    </reaction>
</comment>
<comment type="pathway">
    <text evidence="1">Protein modification; protein lipoylation via endogenous pathway; protein N(6)-(lipoyl)lysine from octanoyl-[acyl-carrier-protein]: step 1/2.</text>
</comment>
<comment type="subcellular location">
    <subcellularLocation>
        <location evidence="1">Cytoplasm</location>
    </subcellularLocation>
</comment>
<comment type="miscellaneous">
    <text evidence="1">In the reaction, the free carboxyl group of octanoic acid is attached via an amide linkage to the epsilon-amino group of a specific lysine residue of lipoyl domains of lipoate-dependent enzymes.</text>
</comment>
<comment type="similarity">
    <text evidence="1">Belongs to the LipB family.</text>
</comment>
<keyword id="KW-0012">Acyltransferase</keyword>
<keyword id="KW-0963">Cytoplasm</keyword>
<keyword id="KW-1185">Reference proteome</keyword>
<keyword id="KW-0808">Transferase</keyword>
<evidence type="ECO:0000255" key="1">
    <source>
        <dbReference type="HAMAP-Rule" id="MF_00013"/>
    </source>
</evidence>
<evidence type="ECO:0000255" key="2">
    <source>
        <dbReference type="PROSITE-ProRule" id="PRU01067"/>
    </source>
</evidence>
<proteinExistence type="inferred from homology"/>
<protein>
    <recommendedName>
        <fullName evidence="1">Octanoyltransferase</fullName>
        <ecNumber evidence="1">2.3.1.181</ecNumber>
    </recommendedName>
    <alternativeName>
        <fullName evidence="1">Lipoate-protein ligase B</fullName>
    </alternativeName>
    <alternativeName>
        <fullName evidence="1">Lipoyl/octanoyl transferase</fullName>
    </alternativeName>
    <alternativeName>
        <fullName evidence="1">Octanoyl-[acyl-carrier-protein]-protein N-octanoyltransferase</fullName>
    </alternativeName>
</protein>
<accession>Q3A7N4</accession>
<gene>
    <name evidence="1" type="primary">lipB</name>
    <name type="ordered locus">Pcar_0350</name>
</gene>
<reference key="1">
    <citation type="submission" date="2005-10" db="EMBL/GenBank/DDBJ databases">
        <title>Complete sequence of Pelobacter carbinolicus DSM 2380.</title>
        <authorList>
            <person name="Copeland A."/>
            <person name="Lucas S."/>
            <person name="Lapidus A."/>
            <person name="Barry K."/>
            <person name="Detter J.C."/>
            <person name="Glavina T."/>
            <person name="Hammon N."/>
            <person name="Israni S."/>
            <person name="Pitluck S."/>
            <person name="Chertkov O."/>
            <person name="Schmutz J."/>
            <person name="Larimer F."/>
            <person name="Land M."/>
            <person name="Kyrpides N."/>
            <person name="Ivanova N."/>
            <person name="Richardson P."/>
        </authorList>
    </citation>
    <scope>NUCLEOTIDE SEQUENCE [LARGE SCALE GENOMIC DNA]</scope>
    <source>
        <strain>DSM 2380 / NBRC 103641 / GraBd1</strain>
    </source>
</reference>
<sequence>MEIKDLGVMPYAEAYALQEQLVRDIAAGSAPETLLLVEHPPVYTLGRSGHMENLLDDSIEVVSINRGGDITYHAPGQLVGYPLLNLGLRGRDLRHYLRFLEEVLIAAAADTGVEGFRREGKTGVWTEQGKLASIGAGARRWVTMHGFALNVCLDLSGFSRIHPCGIVGCTMTSLQQITGQPVSMAQVKARVVYHFQSLLKTWLPLAQVATL</sequence>
<organism>
    <name type="scientific">Syntrophotalea carbinolica (strain DSM 2380 / NBRC 103641 / GraBd1)</name>
    <name type="common">Pelobacter carbinolicus</name>
    <dbReference type="NCBI Taxonomy" id="338963"/>
    <lineage>
        <taxon>Bacteria</taxon>
        <taxon>Pseudomonadati</taxon>
        <taxon>Thermodesulfobacteriota</taxon>
        <taxon>Desulfuromonadia</taxon>
        <taxon>Desulfuromonadales</taxon>
        <taxon>Syntrophotaleaceae</taxon>
        <taxon>Syntrophotalea</taxon>
    </lineage>
</organism>
<name>LIPB_SYNC1</name>
<dbReference type="EC" id="2.3.1.181" evidence="1"/>
<dbReference type="EMBL" id="CP000142">
    <property type="protein sequence ID" value="ABA87610.1"/>
    <property type="molecule type" value="Genomic_DNA"/>
</dbReference>
<dbReference type="RefSeq" id="WP_011340029.1">
    <property type="nucleotide sequence ID" value="NC_007498.2"/>
</dbReference>
<dbReference type="SMR" id="Q3A7N4"/>
<dbReference type="STRING" id="338963.Pcar_0350"/>
<dbReference type="KEGG" id="pca:Pcar_0350"/>
<dbReference type="eggNOG" id="COG0321">
    <property type="taxonomic scope" value="Bacteria"/>
</dbReference>
<dbReference type="HOGENOM" id="CLU_035168_1_3_7"/>
<dbReference type="OrthoDB" id="9787061at2"/>
<dbReference type="UniPathway" id="UPA00538">
    <property type="reaction ID" value="UER00592"/>
</dbReference>
<dbReference type="Proteomes" id="UP000002534">
    <property type="component" value="Chromosome"/>
</dbReference>
<dbReference type="GO" id="GO:0005737">
    <property type="term" value="C:cytoplasm"/>
    <property type="evidence" value="ECO:0007669"/>
    <property type="project" value="UniProtKB-SubCell"/>
</dbReference>
<dbReference type="GO" id="GO:0033819">
    <property type="term" value="F:lipoyl(octanoyl) transferase activity"/>
    <property type="evidence" value="ECO:0007669"/>
    <property type="project" value="UniProtKB-EC"/>
</dbReference>
<dbReference type="GO" id="GO:0036211">
    <property type="term" value="P:protein modification process"/>
    <property type="evidence" value="ECO:0007669"/>
    <property type="project" value="InterPro"/>
</dbReference>
<dbReference type="CDD" id="cd16444">
    <property type="entry name" value="LipB"/>
    <property type="match status" value="1"/>
</dbReference>
<dbReference type="Gene3D" id="3.30.930.10">
    <property type="entry name" value="Bira Bifunctional Protein, Domain 2"/>
    <property type="match status" value="1"/>
</dbReference>
<dbReference type="HAMAP" id="MF_00013">
    <property type="entry name" value="LipB"/>
    <property type="match status" value="1"/>
</dbReference>
<dbReference type="InterPro" id="IPR045864">
    <property type="entry name" value="aa-tRNA-synth_II/BPL/LPL"/>
</dbReference>
<dbReference type="InterPro" id="IPR004143">
    <property type="entry name" value="BPL_LPL_catalytic"/>
</dbReference>
<dbReference type="InterPro" id="IPR000544">
    <property type="entry name" value="Octanoyltransferase"/>
</dbReference>
<dbReference type="InterPro" id="IPR020605">
    <property type="entry name" value="Octanoyltransferase_CS"/>
</dbReference>
<dbReference type="NCBIfam" id="TIGR00214">
    <property type="entry name" value="lipB"/>
    <property type="match status" value="1"/>
</dbReference>
<dbReference type="NCBIfam" id="NF010925">
    <property type="entry name" value="PRK14345.1"/>
    <property type="match status" value="1"/>
</dbReference>
<dbReference type="PANTHER" id="PTHR10993:SF7">
    <property type="entry name" value="LIPOYLTRANSFERASE 2, MITOCHONDRIAL-RELATED"/>
    <property type="match status" value="1"/>
</dbReference>
<dbReference type="PANTHER" id="PTHR10993">
    <property type="entry name" value="OCTANOYLTRANSFERASE"/>
    <property type="match status" value="1"/>
</dbReference>
<dbReference type="Pfam" id="PF21948">
    <property type="entry name" value="LplA-B_cat"/>
    <property type="match status" value="1"/>
</dbReference>
<dbReference type="PIRSF" id="PIRSF016262">
    <property type="entry name" value="LPLase"/>
    <property type="match status" value="1"/>
</dbReference>
<dbReference type="SUPFAM" id="SSF55681">
    <property type="entry name" value="Class II aaRS and biotin synthetases"/>
    <property type="match status" value="1"/>
</dbReference>
<dbReference type="PROSITE" id="PS51733">
    <property type="entry name" value="BPL_LPL_CATALYTIC"/>
    <property type="match status" value="1"/>
</dbReference>
<dbReference type="PROSITE" id="PS01313">
    <property type="entry name" value="LIPB"/>
    <property type="match status" value="1"/>
</dbReference>
<feature type="chain" id="PRO_0000242741" description="Octanoyltransferase">
    <location>
        <begin position="1"/>
        <end position="211"/>
    </location>
</feature>
<feature type="domain" description="BPL/LPL catalytic" evidence="2">
    <location>
        <begin position="28"/>
        <end position="203"/>
    </location>
</feature>
<feature type="active site" description="Acyl-thioester intermediate" evidence="1">
    <location>
        <position position="164"/>
    </location>
</feature>
<feature type="binding site" evidence="1">
    <location>
        <begin position="66"/>
        <end position="73"/>
    </location>
    <ligand>
        <name>substrate</name>
    </ligand>
</feature>
<feature type="binding site" evidence="1">
    <location>
        <begin position="133"/>
        <end position="135"/>
    </location>
    <ligand>
        <name>substrate</name>
    </ligand>
</feature>
<feature type="binding site" evidence="1">
    <location>
        <begin position="146"/>
        <end position="148"/>
    </location>
    <ligand>
        <name>substrate</name>
    </ligand>
</feature>
<feature type="site" description="Lowers pKa of active site Cys" evidence="1">
    <location>
        <position position="130"/>
    </location>
</feature>